<sequence>MVSKQQTMGFQTEVKQMLHLVVHSLYSNKEIFLRELISNASDALDKLRFLALSNGSLFENDSDLKISIQINEKLQTITISDNGIGLSWEEAVENLGTIAKSGTKEFISQLTGEQAKDSQLIGQFGVGFYSAFIVADKVTVKSRRAGLQPEDGIVWESKGDGEFTIGYEKKSTRGTEITLHLKPENDEFLSDWRIRGIISKYSDHICWPIVMKKLSEEGKESKEFETVNKATALWTLQKSEIGEEDYKQLYKHISHDYMDPLTWSHNHVEGKHEYITLLYIPAHAPFDLWQHEAKHGLKLYVKRVFIMDEATQFLPRYLRFIKGIVDASDLPLNISREILQDNKQVESIRAACTKRVLSMLEKMATNDKETYQKFWNEFGLVLKEGPIEDFANKEAIAKLLRFSTTASGSEKQEVSLEEYVSRMKEGQDKIYYITASSYNAAKNSPHLEIFRKKGIEVLLLSDKVDEWLVGYMNEFTGKKLQSISKGKVELGDDETSEQIKEQEKTLEPLIKHIKSVLNERVKDVLLTNRLTDSPACVVADEQDMGLEMQRILQAAGQQIPVSKPIFEINPEHALIKRLHDIQDDNQFELWVTMLFEQAVLAEGGQLDNPADFVNRVNRLLVSS</sequence>
<dbReference type="EMBL" id="CR628337">
    <property type="protein sequence ID" value="CAH15560.1"/>
    <property type="molecule type" value="Genomic_DNA"/>
</dbReference>
<dbReference type="RefSeq" id="WP_011215391.1">
    <property type="nucleotide sequence ID" value="NC_006369.1"/>
</dbReference>
<dbReference type="SMR" id="Q5WWX9"/>
<dbReference type="KEGG" id="lpf:lpl1320"/>
<dbReference type="LegioList" id="lpl1320"/>
<dbReference type="HOGENOM" id="CLU_006684_3_0_6"/>
<dbReference type="Proteomes" id="UP000002517">
    <property type="component" value="Chromosome"/>
</dbReference>
<dbReference type="GO" id="GO:0005737">
    <property type="term" value="C:cytoplasm"/>
    <property type="evidence" value="ECO:0007669"/>
    <property type="project" value="UniProtKB-SubCell"/>
</dbReference>
<dbReference type="GO" id="GO:0005524">
    <property type="term" value="F:ATP binding"/>
    <property type="evidence" value="ECO:0007669"/>
    <property type="project" value="UniProtKB-UniRule"/>
</dbReference>
<dbReference type="GO" id="GO:0016887">
    <property type="term" value="F:ATP hydrolysis activity"/>
    <property type="evidence" value="ECO:0007669"/>
    <property type="project" value="InterPro"/>
</dbReference>
<dbReference type="GO" id="GO:0140662">
    <property type="term" value="F:ATP-dependent protein folding chaperone"/>
    <property type="evidence" value="ECO:0007669"/>
    <property type="project" value="InterPro"/>
</dbReference>
<dbReference type="GO" id="GO:0051082">
    <property type="term" value="F:unfolded protein binding"/>
    <property type="evidence" value="ECO:0007669"/>
    <property type="project" value="UniProtKB-UniRule"/>
</dbReference>
<dbReference type="CDD" id="cd16927">
    <property type="entry name" value="HATPase_Hsp90-like"/>
    <property type="match status" value="1"/>
</dbReference>
<dbReference type="FunFam" id="3.30.230.80:FF:000002">
    <property type="entry name" value="Molecular chaperone HtpG"/>
    <property type="match status" value="1"/>
</dbReference>
<dbReference type="FunFam" id="3.30.565.10:FF:000009">
    <property type="entry name" value="Molecular chaperone HtpG"/>
    <property type="match status" value="1"/>
</dbReference>
<dbReference type="Gene3D" id="3.30.230.80">
    <property type="match status" value="1"/>
</dbReference>
<dbReference type="Gene3D" id="3.40.50.11260">
    <property type="match status" value="1"/>
</dbReference>
<dbReference type="Gene3D" id="1.20.120.790">
    <property type="entry name" value="Heat shock protein 90, C-terminal domain"/>
    <property type="match status" value="1"/>
</dbReference>
<dbReference type="Gene3D" id="3.30.565.10">
    <property type="entry name" value="Histidine kinase-like ATPase, C-terminal domain"/>
    <property type="match status" value="1"/>
</dbReference>
<dbReference type="HAMAP" id="MF_00505">
    <property type="entry name" value="HSP90"/>
    <property type="match status" value="1"/>
</dbReference>
<dbReference type="InterPro" id="IPR036890">
    <property type="entry name" value="HATPase_C_sf"/>
</dbReference>
<dbReference type="InterPro" id="IPR019805">
    <property type="entry name" value="Heat_shock_protein_90_CS"/>
</dbReference>
<dbReference type="InterPro" id="IPR037196">
    <property type="entry name" value="HSP90_C"/>
</dbReference>
<dbReference type="InterPro" id="IPR001404">
    <property type="entry name" value="Hsp90_fam"/>
</dbReference>
<dbReference type="InterPro" id="IPR020575">
    <property type="entry name" value="Hsp90_N"/>
</dbReference>
<dbReference type="InterPro" id="IPR020568">
    <property type="entry name" value="Ribosomal_Su5_D2-typ_SF"/>
</dbReference>
<dbReference type="NCBIfam" id="NF003555">
    <property type="entry name" value="PRK05218.1"/>
    <property type="match status" value="1"/>
</dbReference>
<dbReference type="PANTHER" id="PTHR11528">
    <property type="entry name" value="HEAT SHOCK PROTEIN 90 FAMILY MEMBER"/>
    <property type="match status" value="1"/>
</dbReference>
<dbReference type="Pfam" id="PF13589">
    <property type="entry name" value="HATPase_c_3"/>
    <property type="match status" value="1"/>
</dbReference>
<dbReference type="Pfam" id="PF00183">
    <property type="entry name" value="HSP90"/>
    <property type="match status" value="1"/>
</dbReference>
<dbReference type="PIRSF" id="PIRSF002583">
    <property type="entry name" value="Hsp90"/>
    <property type="match status" value="1"/>
</dbReference>
<dbReference type="PRINTS" id="PR00775">
    <property type="entry name" value="HEATSHOCK90"/>
</dbReference>
<dbReference type="SMART" id="SM00387">
    <property type="entry name" value="HATPase_c"/>
    <property type="match status" value="1"/>
</dbReference>
<dbReference type="SUPFAM" id="SSF55874">
    <property type="entry name" value="ATPase domain of HSP90 chaperone/DNA topoisomerase II/histidine kinase"/>
    <property type="match status" value="1"/>
</dbReference>
<dbReference type="SUPFAM" id="SSF110942">
    <property type="entry name" value="HSP90 C-terminal domain"/>
    <property type="match status" value="1"/>
</dbReference>
<dbReference type="SUPFAM" id="SSF54211">
    <property type="entry name" value="Ribosomal protein S5 domain 2-like"/>
    <property type="match status" value="1"/>
</dbReference>
<dbReference type="PROSITE" id="PS00298">
    <property type="entry name" value="HSP90"/>
    <property type="match status" value="1"/>
</dbReference>
<keyword id="KW-0067">ATP-binding</keyword>
<keyword id="KW-0143">Chaperone</keyword>
<keyword id="KW-0963">Cytoplasm</keyword>
<keyword id="KW-0547">Nucleotide-binding</keyword>
<keyword id="KW-0346">Stress response</keyword>
<reference key="1">
    <citation type="journal article" date="2004" name="Nat. Genet.">
        <title>Evidence in the Legionella pneumophila genome for exploitation of host cell functions and high genome plasticity.</title>
        <authorList>
            <person name="Cazalet C."/>
            <person name="Rusniok C."/>
            <person name="Brueggemann H."/>
            <person name="Zidane N."/>
            <person name="Magnier A."/>
            <person name="Ma L."/>
            <person name="Tichit M."/>
            <person name="Jarraud S."/>
            <person name="Bouchier C."/>
            <person name="Vandenesch F."/>
            <person name="Kunst F."/>
            <person name="Etienne J."/>
            <person name="Glaser P."/>
            <person name="Buchrieser C."/>
        </authorList>
    </citation>
    <scope>NUCLEOTIDE SEQUENCE [LARGE SCALE GENOMIC DNA]</scope>
    <source>
        <strain>Lens</strain>
    </source>
</reference>
<feature type="chain" id="PRO_0000224212" description="Chaperone protein HtpG">
    <location>
        <begin position="1"/>
        <end position="623"/>
    </location>
</feature>
<feature type="region of interest" description="A; substrate-binding" evidence="1">
    <location>
        <begin position="1"/>
        <end position="336"/>
    </location>
</feature>
<feature type="region of interest" description="B" evidence="1">
    <location>
        <begin position="337"/>
        <end position="550"/>
    </location>
</feature>
<feature type="region of interest" description="C" evidence="1">
    <location>
        <begin position="551"/>
        <end position="623"/>
    </location>
</feature>
<proteinExistence type="inferred from homology"/>
<protein>
    <recommendedName>
        <fullName evidence="1">Chaperone protein HtpG</fullName>
    </recommendedName>
    <alternativeName>
        <fullName evidence="1">Heat shock protein HtpG</fullName>
    </alternativeName>
    <alternativeName>
        <fullName evidence="1">High temperature protein G</fullName>
    </alternativeName>
</protein>
<evidence type="ECO:0000255" key="1">
    <source>
        <dbReference type="HAMAP-Rule" id="MF_00505"/>
    </source>
</evidence>
<organism>
    <name type="scientific">Legionella pneumophila (strain Lens)</name>
    <dbReference type="NCBI Taxonomy" id="297245"/>
    <lineage>
        <taxon>Bacteria</taxon>
        <taxon>Pseudomonadati</taxon>
        <taxon>Pseudomonadota</taxon>
        <taxon>Gammaproteobacteria</taxon>
        <taxon>Legionellales</taxon>
        <taxon>Legionellaceae</taxon>
        <taxon>Legionella</taxon>
    </lineage>
</organism>
<comment type="function">
    <text evidence="1">Molecular chaperone. Has ATPase activity.</text>
</comment>
<comment type="subunit">
    <text evidence="1">Homodimer.</text>
</comment>
<comment type="subcellular location">
    <subcellularLocation>
        <location evidence="1">Cytoplasm</location>
    </subcellularLocation>
</comment>
<comment type="similarity">
    <text evidence="1">Belongs to the heat shock protein 90 family.</text>
</comment>
<gene>
    <name evidence="1" type="primary">htpG</name>
    <name type="ordered locus">lpl1320</name>
</gene>
<accession>Q5WWX9</accession>
<name>HTPG_LEGPL</name>